<keyword id="KW-0963">Cytoplasm</keyword>
<keyword id="KW-0238">DNA-binding</keyword>
<keyword id="KW-1185">Reference proteome</keyword>
<keyword id="KW-0804">Transcription</keyword>
<keyword id="KW-0805">Transcription regulation</keyword>
<feature type="chain" id="PRO_1000045382" description="Probable transcriptional regulatory protein Sfum_0996">
    <location>
        <begin position="1"/>
        <end position="249"/>
    </location>
</feature>
<accession>A0LGY9</accession>
<evidence type="ECO:0000255" key="1">
    <source>
        <dbReference type="HAMAP-Rule" id="MF_00693"/>
    </source>
</evidence>
<protein>
    <recommendedName>
        <fullName evidence="1">Probable transcriptional regulatory protein Sfum_0996</fullName>
    </recommendedName>
</protein>
<proteinExistence type="inferred from homology"/>
<gene>
    <name type="ordered locus">Sfum_0996</name>
</gene>
<sequence>MSGHSKWSTIKHKKGAADAKRGKVFTKIIKEIMVAARMGGGAIDANPRLRAAVLAAKAENMPKENIERAIKKGTGELEGVAYEEMNYEGYGPGGVAVLVDIMTDNRNRAASDIRHIFSRNGGNLGEAGCVAWMFSKKGSIVFNKDKVSEDELMEIALDAGADDVKDEDDQFEVITSLEEFVNVRAAFDARELAYEVAEITMVPQTTVRVEDEKLAQQLLRLMDGLEDSDDVQNAYANFDIPDEILDRIA</sequence>
<reference key="1">
    <citation type="submission" date="2006-10" db="EMBL/GenBank/DDBJ databases">
        <title>Complete sequence of Syntrophobacter fumaroxidans MPOB.</title>
        <authorList>
            <consortium name="US DOE Joint Genome Institute"/>
            <person name="Copeland A."/>
            <person name="Lucas S."/>
            <person name="Lapidus A."/>
            <person name="Barry K."/>
            <person name="Detter J.C."/>
            <person name="Glavina del Rio T."/>
            <person name="Hammon N."/>
            <person name="Israni S."/>
            <person name="Pitluck S."/>
            <person name="Goltsman E.G."/>
            <person name="Martinez M."/>
            <person name="Schmutz J."/>
            <person name="Larimer F."/>
            <person name="Land M."/>
            <person name="Hauser L."/>
            <person name="Kyrpides N."/>
            <person name="Kim E."/>
            <person name="Boone D.R."/>
            <person name="Brockman F."/>
            <person name="Culley D."/>
            <person name="Ferry J."/>
            <person name="Gunsalus R."/>
            <person name="McInerney M.J."/>
            <person name="Morrison M."/>
            <person name="Plugge C."/>
            <person name="Rohlin L."/>
            <person name="Scholten J."/>
            <person name="Sieber J."/>
            <person name="Stams A.J.M."/>
            <person name="Worm P."/>
            <person name="Henstra A.M."/>
            <person name="Richardson P."/>
        </authorList>
    </citation>
    <scope>NUCLEOTIDE SEQUENCE [LARGE SCALE GENOMIC DNA]</scope>
    <source>
        <strain>DSM 10017 / MPOB</strain>
    </source>
</reference>
<comment type="subcellular location">
    <subcellularLocation>
        <location evidence="1">Cytoplasm</location>
    </subcellularLocation>
</comment>
<comment type="similarity">
    <text evidence="1">Belongs to the TACO1 family.</text>
</comment>
<organism>
    <name type="scientific">Syntrophobacter fumaroxidans (strain DSM 10017 / MPOB)</name>
    <dbReference type="NCBI Taxonomy" id="335543"/>
    <lineage>
        <taxon>Bacteria</taxon>
        <taxon>Pseudomonadati</taxon>
        <taxon>Thermodesulfobacteriota</taxon>
        <taxon>Syntrophobacteria</taxon>
        <taxon>Syntrophobacterales</taxon>
        <taxon>Syntrophobacteraceae</taxon>
        <taxon>Syntrophobacter</taxon>
    </lineage>
</organism>
<name>Y996_SYNFM</name>
<dbReference type="EMBL" id="CP000478">
    <property type="protein sequence ID" value="ABK16691.1"/>
    <property type="molecule type" value="Genomic_DNA"/>
</dbReference>
<dbReference type="RefSeq" id="WP_011697862.1">
    <property type="nucleotide sequence ID" value="NC_008554.1"/>
</dbReference>
<dbReference type="SMR" id="A0LGY9"/>
<dbReference type="FunCoup" id="A0LGY9">
    <property type="interactions" value="533"/>
</dbReference>
<dbReference type="STRING" id="335543.Sfum_0996"/>
<dbReference type="KEGG" id="sfu:Sfum_0996"/>
<dbReference type="eggNOG" id="COG0217">
    <property type="taxonomic scope" value="Bacteria"/>
</dbReference>
<dbReference type="HOGENOM" id="CLU_062974_2_2_7"/>
<dbReference type="InParanoid" id="A0LGY9"/>
<dbReference type="OrthoDB" id="9781053at2"/>
<dbReference type="Proteomes" id="UP000001784">
    <property type="component" value="Chromosome"/>
</dbReference>
<dbReference type="GO" id="GO:0005829">
    <property type="term" value="C:cytosol"/>
    <property type="evidence" value="ECO:0007669"/>
    <property type="project" value="TreeGrafter"/>
</dbReference>
<dbReference type="GO" id="GO:0003677">
    <property type="term" value="F:DNA binding"/>
    <property type="evidence" value="ECO:0007669"/>
    <property type="project" value="UniProtKB-UniRule"/>
</dbReference>
<dbReference type="GO" id="GO:0006355">
    <property type="term" value="P:regulation of DNA-templated transcription"/>
    <property type="evidence" value="ECO:0007669"/>
    <property type="project" value="UniProtKB-UniRule"/>
</dbReference>
<dbReference type="FunFam" id="1.10.10.200:FF:000002">
    <property type="entry name" value="Probable transcriptional regulatory protein CLM62_37755"/>
    <property type="match status" value="1"/>
</dbReference>
<dbReference type="FunFam" id="3.30.70.980:FF:000002">
    <property type="entry name" value="Probable transcriptional regulatory protein YebC"/>
    <property type="match status" value="1"/>
</dbReference>
<dbReference type="Gene3D" id="1.10.10.200">
    <property type="match status" value="1"/>
</dbReference>
<dbReference type="Gene3D" id="3.30.70.980">
    <property type="match status" value="2"/>
</dbReference>
<dbReference type="HAMAP" id="MF_00693">
    <property type="entry name" value="Transcrip_reg_TACO1"/>
    <property type="match status" value="1"/>
</dbReference>
<dbReference type="InterPro" id="IPR017856">
    <property type="entry name" value="Integrase-like_N"/>
</dbReference>
<dbReference type="InterPro" id="IPR048300">
    <property type="entry name" value="TACO1_YebC-like_2nd/3rd_dom"/>
</dbReference>
<dbReference type="InterPro" id="IPR049083">
    <property type="entry name" value="TACO1_YebC_N"/>
</dbReference>
<dbReference type="InterPro" id="IPR002876">
    <property type="entry name" value="Transcrip_reg_TACO1-like"/>
</dbReference>
<dbReference type="InterPro" id="IPR026564">
    <property type="entry name" value="Transcrip_reg_TACO1-like_dom3"/>
</dbReference>
<dbReference type="InterPro" id="IPR029072">
    <property type="entry name" value="YebC-like"/>
</dbReference>
<dbReference type="NCBIfam" id="NF001030">
    <property type="entry name" value="PRK00110.1"/>
    <property type="match status" value="1"/>
</dbReference>
<dbReference type="NCBIfam" id="NF009044">
    <property type="entry name" value="PRK12378.1"/>
    <property type="match status" value="1"/>
</dbReference>
<dbReference type="NCBIfam" id="TIGR01033">
    <property type="entry name" value="YebC/PmpR family DNA-binding transcriptional regulator"/>
    <property type="match status" value="1"/>
</dbReference>
<dbReference type="PANTHER" id="PTHR12532:SF6">
    <property type="entry name" value="TRANSCRIPTIONAL REGULATORY PROTEIN YEBC-RELATED"/>
    <property type="match status" value="1"/>
</dbReference>
<dbReference type="PANTHER" id="PTHR12532">
    <property type="entry name" value="TRANSLATIONAL ACTIVATOR OF CYTOCHROME C OXIDASE 1"/>
    <property type="match status" value="1"/>
</dbReference>
<dbReference type="Pfam" id="PF20772">
    <property type="entry name" value="TACO1_YebC_N"/>
    <property type="match status" value="1"/>
</dbReference>
<dbReference type="Pfam" id="PF01709">
    <property type="entry name" value="Transcrip_reg"/>
    <property type="match status" value="1"/>
</dbReference>
<dbReference type="SUPFAM" id="SSF75625">
    <property type="entry name" value="YebC-like"/>
    <property type="match status" value="1"/>
</dbReference>